<gene>
    <name evidence="1" type="primary">tpiA</name>
    <name type="ordered locus">BMEI0846</name>
</gene>
<reference key="1">
    <citation type="journal article" date="2002" name="Proc. Natl. Acad. Sci. U.S.A.">
        <title>The genome sequence of the facultative intracellular pathogen Brucella melitensis.</title>
        <authorList>
            <person name="DelVecchio V.G."/>
            <person name="Kapatral V."/>
            <person name="Redkar R.J."/>
            <person name="Patra G."/>
            <person name="Mujer C."/>
            <person name="Los T."/>
            <person name="Ivanova N."/>
            <person name="Anderson I."/>
            <person name="Bhattacharyya A."/>
            <person name="Lykidis A."/>
            <person name="Reznik G."/>
            <person name="Jablonski L."/>
            <person name="Larsen N."/>
            <person name="D'Souza M."/>
            <person name="Bernal A."/>
            <person name="Mazur M."/>
            <person name="Goltsman E."/>
            <person name="Selkov E."/>
            <person name="Elzer P.H."/>
            <person name="Hagius S."/>
            <person name="O'Callaghan D."/>
            <person name="Letesson J.-J."/>
            <person name="Haselkorn R."/>
            <person name="Kyrpides N.C."/>
            <person name="Overbeek R."/>
        </authorList>
    </citation>
    <scope>NUCLEOTIDE SEQUENCE [LARGE SCALE GENOMIC DNA]</scope>
    <source>
        <strain>ATCC 23456 / CCUG 17765 / NCTC 10094 / 16M</strain>
    </source>
</reference>
<name>TPIS_BRUME</name>
<feature type="chain" id="PRO_0000090191" description="Triosephosphate isomerase">
    <location>
        <begin position="1"/>
        <end position="254"/>
    </location>
</feature>
<feature type="active site" description="Electrophile" evidence="1">
    <location>
        <position position="99"/>
    </location>
</feature>
<feature type="active site" description="Proton acceptor" evidence="1">
    <location>
        <position position="169"/>
    </location>
</feature>
<feature type="binding site" evidence="1">
    <location>
        <begin position="12"/>
        <end position="14"/>
    </location>
    <ligand>
        <name>substrate</name>
    </ligand>
</feature>
<feature type="binding site" evidence="1">
    <location>
        <position position="175"/>
    </location>
    <ligand>
        <name>substrate</name>
    </ligand>
</feature>
<feature type="binding site" evidence="1">
    <location>
        <position position="214"/>
    </location>
    <ligand>
        <name>substrate</name>
    </ligand>
</feature>
<feature type="binding site" evidence="1">
    <location>
        <begin position="235"/>
        <end position="236"/>
    </location>
    <ligand>
        <name>substrate</name>
    </ligand>
</feature>
<organism>
    <name type="scientific">Brucella melitensis biotype 1 (strain ATCC 23456 / CCUG 17765 / NCTC 10094 / 16M)</name>
    <dbReference type="NCBI Taxonomy" id="224914"/>
    <lineage>
        <taxon>Bacteria</taxon>
        <taxon>Pseudomonadati</taxon>
        <taxon>Pseudomonadota</taxon>
        <taxon>Alphaproteobacteria</taxon>
        <taxon>Hyphomicrobiales</taxon>
        <taxon>Brucellaceae</taxon>
        <taxon>Brucella/Ochrobactrum group</taxon>
        <taxon>Brucella</taxon>
    </lineage>
</organism>
<keyword id="KW-0963">Cytoplasm</keyword>
<keyword id="KW-0312">Gluconeogenesis</keyword>
<keyword id="KW-0324">Glycolysis</keyword>
<keyword id="KW-0413">Isomerase</keyword>
<evidence type="ECO:0000255" key="1">
    <source>
        <dbReference type="HAMAP-Rule" id="MF_00147"/>
    </source>
</evidence>
<comment type="function">
    <text evidence="1">Involved in the gluconeogenesis. Catalyzes stereospecifically the conversion of dihydroxyacetone phosphate (DHAP) to D-glyceraldehyde-3-phosphate (G3P).</text>
</comment>
<comment type="catalytic activity">
    <reaction evidence="1">
        <text>D-glyceraldehyde 3-phosphate = dihydroxyacetone phosphate</text>
        <dbReference type="Rhea" id="RHEA:18585"/>
        <dbReference type="ChEBI" id="CHEBI:57642"/>
        <dbReference type="ChEBI" id="CHEBI:59776"/>
        <dbReference type="EC" id="5.3.1.1"/>
    </reaction>
</comment>
<comment type="pathway">
    <text evidence="1">Carbohydrate biosynthesis; gluconeogenesis.</text>
</comment>
<comment type="pathway">
    <text evidence="1">Carbohydrate degradation; glycolysis; D-glyceraldehyde 3-phosphate from glycerone phosphate: step 1/1.</text>
</comment>
<comment type="subunit">
    <text evidence="1">Homodimer.</text>
</comment>
<comment type="subcellular location">
    <subcellularLocation>
        <location evidence="1">Cytoplasm</location>
    </subcellularLocation>
</comment>
<comment type="similarity">
    <text evidence="1">Belongs to the triosephosphate isomerase family.</text>
</comment>
<sequence>MTPGIRPLVAGNWKMNGKGESLTELRAIAAGLSSDLGRKLDAVICVPATLLSRAAETLEGETVGLGGQDAHFKTSGAHTGDISPEMLKEAGATHVILGHSERRTDHHESNKLICAKTEAAWAAGLVAIVCVGETASERKAERALDVIGDQLSGSLPDGVTAENTIIAYEPIWAIGTGLTPTVQDVRAAHAFMREQLIERFGAKGAHLRLLYGGSVKPSNAAELLGVADVDGALVGGASLKAADFLAICETYRNL</sequence>
<proteinExistence type="inferred from homology"/>
<accession>Q8YHF5</accession>
<protein>
    <recommendedName>
        <fullName evidence="1">Triosephosphate isomerase</fullName>
        <shortName evidence="1">TIM</shortName>
        <shortName evidence="1">TPI</shortName>
        <ecNumber evidence="1">5.3.1.1</ecNumber>
    </recommendedName>
    <alternativeName>
        <fullName evidence="1">Triose-phosphate isomerase</fullName>
    </alternativeName>
</protein>
<dbReference type="EC" id="5.3.1.1" evidence="1"/>
<dbReference type="EMBL" id="AE008917">
    <property type="protein sequence ID" value="AAL52027.1"/>
    <property type="molecule type" value="Genomic_DNA"/>
</dbReference>
<dbReference type="PIR" id="AH3357">
    <property type="entry name" value="AH3357"/>
</dbReference>
<dbReference type="RefSeq" id="WP_004683846.1">
    <property type="nucleotide sequence ID" value="NC_003317.1"/>
</dbReference>
<dbReference type="SMR" id="Q8YHF5"/>
<dbReference type="GeneID" id="29593657"/>
<dbReference type="KEGG" id="bme:BMEI0846"/>
<dbReference type="KEGG" id="bmel:DK63_574"/>
<dbReference type="PATRIC" id="fig|224914.52.peg.598"/>
<dbReference type="eggNOG" id="COG0149">
    <property type="taxonomic scope" value="Bacteria"/>
</dbReference>
<dbReference type="PhylomeDB" id="Q8YHF5"/>
<dbReference type="UniPathway" id="UPA00109">
    <property type="reaction ID" value="UER00189"/>
</dbReference>
<dbReference type="UniPathway" id="UPA00138"/>
<dbReference type="Proteomes" id="UP000000419">
    <property type="component" value="Chromosome I"/>
</dbReference>
<dbReference type="GO" id="GO:0005829">
    <property type="term" value="C:cytosol"/>
    <property type="evidence" value="ECO:0007669"/>
    <property type="project" value="TreeGrafter"/>
</dbReference>
<dbReference type="GO" id="GO:0004807">
    <property type="term" value="F:triose-phosphate isomerase activity"/>
    <property type="evidence" value="ECO:0007669"/>
    <property type="project" value="UniProtKB-UniRule"/>
</dbReference>
<dbReference type="GO" id="GO:0006094">
    <property type="term" value="P:gluconeogenesis"/>
    <property type="evidence" value="ECO:0007669"/>
    <property type="project" value="UniProtKB-UniRule"/>
</dbReference>
<dbReference type="GO" id="GO:0046166">
    <property type="term" value="P:glyceraldehyde-3-phosphate biosynthetic process"/>
    <property type="evidence" value="ECO:0007669"/>
    <property type="project" value="TreeGrafter"/>
</dbReference>
<dbReference type="GO" id="GO:0019563">
    <property type="term" value="P:glycerol catabolic process"/>
    <property type="evidence" value="ECO:0007669"/>
    <property type="project" value="TreeGrafter"/>
</dbReference>
<dbReference type="GO" id="GO:0006096">
    <property type="term" value="P:glycolytic process"/>
    <property type="evidence" value="ECO:0007669"/>
    <property type="project" value="UniProtKB-UniRule"/>
</dbReference>
<dbReference type="CDD" id="cd00311">
    <property type="entry name" value="TIM"/>
    <property type="match status" value="1"/>
</dbReference>
<dbReference type="FunFam" id="3.20.20.70:FF:000016">
    <property type="entry name" value="Triosephosphate isomerase"/>
    <property type="match status" value="1"/>
</dbReference>
<dbReference type="Gene3D" id="3.20.20.70">
    <property type="entry name" value="Aldolase class I"/>
    <property type="match status" value="1"/>
</dbReference>
<dbReference type="HAMAP" id="MF_00147_B">
    <property type="entry name" value="TIM_B"/>
    <property type="match status" value="1"/>
</dbReference>
<dbReference type="InterPro" id="IPR013785">
    <property type="entry name" value="Aldolase_TIM"/>
</dbReference>
<dbReference type="InterPro" id="IPR035990">
    <property type="entry name" value="TIM_sf"/>
</dbReference>
<dbReference type="InterPro" id="IPR022896">
    <property type="entry name" value="TrioseP_Isoase_bac/euk"/>
</dbReference>
<dbReference type="InterPro" id="IPR000652">
    <property type="entry name" value="Triosephosphate_isomerase"/>
</dbReference>
<dbReference type="InterPro" id="IPR020861">
    <property type="entry name" value="Triosephosphate_isomerase_AS"/>
</dbReference>
<dbReference type="NCBIfam" id="TIGR00419">
    <property type="entry name" value="tim"/>
    <property type="match status" value="1"/>
</dbReference>
<dbReference type="PANTHER" id="PTHR21139">
    <property type="entry name" value="TRIOSEPHOSPHATE ISOMERASE"/>
    <property type="match status" value="1"/>
</dbReference>
<dbReference type="PANTHER" id="PTHR21139:SF42">
    <property type="entry name" value="TRIOSEPHOSPHATE ISOMERASE"/>
    <property type="match status" value="1"/>
</dbReference>
<dbReference type="Pfam" id="PF00121">
    <property type="entry name" value="TIM"/>
    <property type="match status" value="1"/>
</dbReference>
<dbReference type="SUPFAM" id="SSF51351">
    <property type="entry name" value="Triosephosphate isomerase (TIM)"/>
    <property type="match status" value="1"/>
</dbReference>
<dbReference type="PROSITE" id="PS00171">
    <property type="entry name" value="TIM_1"/>
    <property type="match status" value="1"/>
</dbReference>
<dbReference type="PROSITE" id="PS51440">
    <property type="entry name" value="TIM_2"/>
    <property type="match status" value="1"/>
</dbReference>